<reference key="1">
    <citation type="journal article" date="2011" name="Genet. Mol. Res.">
        <title>Identification of 18 genes encoding necrosis-inducing proteins from the plant pathogen Phytophthora capsici (Pythiaceae: Oomycetes).</title>
        <authorList>
            <person name="Feng B.Z."/>
            <person name="Li P.Q."/>
            <person name="Fu L."/>
            <person name="Sun B.B."/>
            <person name="Zhang X.G."/>
        </authorList>
    </citation>
    <scope>NUCLEOTIDE SEQUENCE [GENOMIC DNA]</scope>
    <scope>DOMAIN</scope>
</reference>
<reference key="2">
    <citation type="journal article" date="2014" name="BMC Plant Biol.">
        <title>Characterization of necrosis-inducing NLP proteins in Phytophthora capsici.</title>
        <authorList>
            <person name="Feng B.Z."/>
            <person name="Zhu X.P."/>
            <person name="Fu L."/>
            <person name="Lv R.F."/>
            <person name="Storey D."/>
            <person name="Tooley P."/>
            <person name="Zhang X.G."/>
        </authorList>
    </citation>
    <scope>INDUCTION</scope>
    <scope>FUNCTION</scope>
</reference>
<sequence length="338" mass="37326">MRFTTIFWISLTVLATVRAEDGSHAQNEVQAGDGSHVQNEVQVGSEPQTQDSIETPKPTIKYIDFGDLTLSPSASSPAKRNVTLPPDTTMRPDPRQTEPPTEAPTPASTPAPTPDPGPWVDKWIGHDQVKPFPQPEPVTISEKAGVKFKPQIQIRTGCEPYPAVNEYGETGGGLKTTGKSRGNCGGSGYGSQVYGRSTWIRGVWAIMYSWYFPKDSPSPKMGHRHDWEHAIVFIDNPEVSEPKILACSVSSHDGYKKYNPCPSWVIDGTSLKVRYKHAWPLNHDLDATGDGGKFQDSIMWNQLTEDARRALNSVSFGKANTPFNDGKFMPKIENAWPF</sequence>
<feature type="signal peptide" evidence="2">
    <location>
        <begin position="1"/>
        <end position="19"/>
    </location>
</feature>
<feature type="chain" id="PRO_5003982510" description="NLP effector protein 6">
    <location>
        <begin position="20"/>
        <end position="338"/>
    </location>
</feature>
<feature type="region of interest" description="Disordered" evidence="4">
    <location>
        <begin position="68"/>
        <end position="119"/>
    </location>
</feature>
<feature type="short sequence motif" description="Conserved undecapeptide motif I" evidence="1">
    <location>
        <begin position="205"/>
        <end position="215"/>
    </location>
</feature>
<feature type="short sequence motif" description="Hepta-peptide GHRHDWE motif II" evidence="10">
    <location>
        <begin position="222"/>
        <end position="227"/>
    </location>
</feature>
<feature type="compositionally biased region" description="Pro residues" evidence="4">
    <location>
        <begin position="101"/>
        <end position="117"/>
    </location>
</feature>
<feature type="glycosylation site" description="N-linked (GlcNAc...) asparagine" evidence="3">
    <location>
        <position position="81"/>
    </location>
</feature>
<proteinExistence type="evidence at transcript level"/>
<organism>
    <name type="scientific">Phytophthora capsici</name>
    <dbReference type="NCBI Taxonomy" id="4784"/>
    <lineage>
        <taxon>Eukaryota</taxon>
        <taxon>Sar</taxon>
        <taxon>Stramenopiles</taxon>
        <taxon>Oomycota</taxon>
        <taxon>Peronosporales</taxon>
        <taxon>Peronosporaceae</taxon>
        <taxon>Phytophthora</taxon>
    </lineage>
</organism>
<dbReference type="EMBL" id="HM543172">
    <property type="protein sequence ID" value="AEJ88237.1"/>
    <property type="molecule type" value="Genomic_DNA"/>
</dbReference>
<dbReference type="SMR" id="L7NCR1"/>
<dbReference type="GlyCosmos" id="L7NCR1">
    <property type="glycosylation" value="1 site, No reported glycans"/>
</dbReference>
<dbReference type="VEuPathDB" id="FungiDB:DVH05_001468"/>
<dbReference type="GO" id="GO:0005576">
    <property type="term" value="C:extracellular region"/>
    <property type="evidence" value="ECO:0007669"/>
    <property type="project" value="UniProtKB-SubCell"/>
</dbReference>
<dbReference type="InterPro" id="IPR008701">
    <property type="entry name" value="NPP1"/>
</dbReference>
<dbReference type="PANTHER" id="PTHR33657">
    <property type="entry name" value="DOMAIN PROTEIN, PUTATIVE (AFU_ORTHOLOGUE AFUA_5G00600)-RELATED"/>
    <property type="match status" value="1"/>
</dbReference>
<dbReference type="PANTHER" id="PTHR33657:SF8">
    <property type="entry name" value="DOMAIN PROTEIN, PUTATIVE (AFU_ORTHOLOGUE AFUA_5G00600)-RELATED"/>
    <property type="match status" value="1"/>
</dbReference>
<dbReference type="Pfam" id="PF05630">
    <property type="entry name" value="NPP1"/>
    <property type="match status" value="1"/>
</dbReference>
<protein>
    <recommendedName>
        <fullName evidence="7">NLP effector protein 6</fullName>
    </recommendedName>
    <alternativeName>
        <fullName evidence="6">Necrosis-inducing protein 6</fullName>
    </alternativeName>
    <alternativeName>
        <fullName evidence="6">Nep1-like protein 6</fullName>
    </alternativeName>
</protein>
<keyword id="KW-0325">Glycoprotein</keyword>
<keyword id="KW-0964">Secreted</keyword>
<keyword id="KW-0732">Signal</keyword>
<keyword id="KW-0843">Virulence</keyword>
<gene>
    <name evidence="7" type="primary">NLP6</name>
    <name evidence="6" type="synonym">NPP6</name>
</gene>
<accession>L7NCR1</accession>
<evidence type="ECO:0000250" key="1">
    <source>
        <dbReference type="UniProtKB" id="L7NCR0"/>
    </source>
</evidence>
<evidence type="ECO:0000255" key="2"/>
<evidence type="ECO:0000255" key="3">
    <source>
        <dbReference type="PROSITE-ProRule" id="PRU00498"/>
    </source>
</evidence>
<evidence type="ECO:0000256" key="4">
    <source>
        <dbReference type="SAM" id="MobiDB-lite"/>
    </source>
</evidence>
<evidence type="ECO:0000269" key="5">
    <source>
    </source>
</evidence>
<evidence type="ECO:0000303" key="6">
    <source>
    </source>
</evidence>
<evidence type="ECO:0000303" key="7">
    <source>
    </source>
</evidence>
<evidence type="ECO:0000305" key="8"/>
<evidence type="ECO:0000305" key="9">
    <source>
    </source>
</evidence>
<evidence type="ECO:0000305" key="10">
    <source>
    </source>
</evidence>
<name>NLP6_PHYCP</name>
<comment type="function">
    <text evidence="5">Secreted effector that contributes strongly to virulence during infection by P.capsici. Causes large necrotic areas in both host C.annuum and non-host N.benthamiana.</text>
</comment>
<comment type="subcellular location">
    <subcellularLocation>
        <location evidence="9">Secreted</location>
    </subcellularLocation>
</comment>
<comment type="induction">
    <text evidence="5">Expression reached the highest levels at 3 days after inoculation of pepper leaves, followed by a gradual decline.</text>
</comment>
<comment type="domain">
    <text evidence="1">Key residues/motif important for the effector activities are degenerated in most NLPs, including the nlp24 peptide consisting of the conserved region I (11-aa immunogenic part) and conserved region II (the heptapeptide GHRHDWE motif) that is important for phytotoxic activity.</text>
</comment>
<comment type="similarity">
    <text evidence="8">Belongs to the Necrosis inducing protein (NPP1) family.</text>
</comment>